<reference key="1">
    <citation type="journal article" date="1999" name="Curr. Genet.">
        <title>Volvox germline-specific genes that are putative targets of RegA repression encode chloroplast proteins.</title>
        <authorList>
            <person name="Meissner M."/>
            <person name="Stark K."/>
            <person name="Cresnar B."/>
            <person name="Kirk D.L."/>
            <person name="Schmitt R."/>
        </authorList>
    </citation>
    <scope>NUCLEOTIDE SEQUENCE [MRNA]</scope>
    <source>
        <strain>f. Nagariensis</strain>
    </source>
</reference>
<gene>
    <name type="primary">PSAN</name>
</gene>
<evidence type="ECO:0000250" key="1"/>
<evidence type="ECO:0000305" key="2"/>
<sequence length="139" mass="14759">MAVAMRAQCAKVQAARPARATTVVCRASAQSRRELLGLGVLLGAAALAPAANAGVVEDLLAKSAANKALNNKKRLATSYANLARSRTVYDGTCQFPENFFGCEELAFNKGVKYIAEDLKIECEGKDAKSCGSKFTLRSK</sequence>
<dbReference type="EMBL" id="AF110781">
    <property type="protein sequence ID" value="AAD55563.1"/>
    <property type="molecule type" value="mRNA"/>
</dbReference>
<dbReference type="SMR" id="Q9SBN5"/>
<dbReference type="KEGG" id="vcn:VOLCADRAFT_109887"/>
<dbReference type="OMA" id="MGATCAN"/>
<dbReference type="GO" id="GO:0030093">
    <property type="term" value="C:chloroplast photosystem I"/>
    <property type="evidence" value="ECO:0007669"/>
    <property type="project" value="TreeGrafter"/>
</dbReference>
<dbReference type="GO" id="GO:0015979">
    <property type="term" value="P:photosynthesis"/>
    <property type="evidence" value="ECO:0007669"/>
    <property type="project" value="UniProtKB-KW"/>
</dbReference>
<dbReference type="FunFam" id="4.10.1190.10:FF:000001">
    <property type="entry name" value="Photosystem I reaction center subunit N"/>
    <property type="match status" value="1"/>
</dbReference>
<dbReference type="Gene3D" id="4.10.1190.10">
    <property type="entry name" value="Chlorophyll A-B binding protein"/>
    <property type="match status" value="1"/>
</dbReference>
<dbReference type="InterPro" id="IPR008796">
    <property type="entry name" value="PSAN"/>
</dbReference>
<dbReference type="InterPro" id="IPR044907">
    <property type="entry name" value="PSAN_sf"/>
</dbReference>
<dbReference type="PANTHER" id="PTHR36814">
    <property type="entry name" value="PHOTOSYSTEM I REACTION CENTER SUBUNIT N, CHLOROPLASTIC"/>
    <property type="match status" value="1"/>
</dbReference>
<dbReference type="PANTHER" id="PTHR36814:SF1">
    <property type="entry name" value="PHOTOSYSTEM I REACTION CENTER SUBUNIT N, CHLOROPLASTIC"/>
    <property type="match status" value="1"/>
</dbReference>
<dbReference type="Pfam" id="PF05479">
    <property type="entry name" value="PsaN"/>
    <property type="match status" value="1"/>
</dbReference>
<comment type="function">
    <text evidence="1">May function in mediating the binding of the antenna complexes to the PSI reaction center and core antenna.</text>
</comment>
<comment type="subcellular location">
    <subcellularLocation>
        <location evidence="1">Plastid</location>
        <location evidence="1">Chloroplast thylakoid membrane</location>
        <topology evidence="1">Peripheral membrane protein</topology>
        <orientation evidence="1">Lumenal side</orientation>
    </subcellularLocation>
</comment>
<comment type="similarity">
    <text evidence="2">Belongs to the psaN family.</text>
</comment>
<feature type="transit peptide" description="Chloroplast" evidence="1">
    <location>
        <begin position="1"/>
        <end position="53"/>
    </location>
</feature>
<feature type="chain" id="PRO_0000029359" description="Photosystem I reaction center subunit N, chloroplastic">
    <location>
        <begin position="54"/>
        <end position="139"/>
    </location>
</feature>
<organism>
    <name type="scientific">Volvox carteri</name>
    <name type="common">Green alga</name>
    <dbReference type="NCBI Taxonomy" id="3067"/>
    <lineage>
        <taxon>Eukaryota</taxon>
        <taxon>Viridiplantae</taxon>
        <taxon>Chlorophyta</taxon>
        <taxon>core chlorophytes</taxon>
        <taxon>Chlorophyceae</taxon>
        <taxon>CS clade</taxon>
        <taxon>Chlamydomonadales</taxon>
        <taxon>Volvocaceae</taxon>
        <taxon>Volvox</taxon>
    </lineage>
</organism>
<name>PSAN_VOLCA</name>
<accession>Q9SBN5</accession>
<keyword id="KW-0150">Chloroplast</keyword>
<keyword id="KW-0472">Membrane</keyword>
<keyword id="KW-0602">Photosynthesis</keyword>
<keyword id="KW-0603">Photosystem I</keyword>
<keyword id="KW-0934">Plastid</keyword>
<keyword id="KW-0793">Thylakoid</keyword>
<keyword id="KW-0809">Transit peptide</keyword>
<proteinExistence type="evidence at transcript level"/>
<protein>
    <recommendedName>
        <fullName>Photosystem I reaction center subunit N, chloroplastic</fullName>
        <shortName>PSI-N</shortName>
    </recommendedName>
</protein>